<accession>P27071</accession>
<evidence type="ECO:0000255" key="1">
    <source>
        <dbReference type="HAMAP-Rule" id="MF_00537"/>
    </source>
</evidence>
<evidence type="ECO:0000305" key="2"/>
<dbReference type="EMBL" id="X61798">
    <property type="protein sequence ID" value="CAA43900.1"/>
    <property type="molecule type" value="Genomic_DNA"/>
</dbReference>
<dbReference type="EMBL" id="M81884">
    <property type="protein sequence ID" value="AAA65852.1"/>
    <property type="molecule type" value="Genomic_DNA"/>
</dbReference>
<dbReference type="PIR" id="S17794">
    <property type="entry name" value="R3EJ14"/>
</dbReference>
<dbReference type="RefSeq" id="NP_054378.1">
    <property type="nucleotide sequence ID" value="NC_001568.1"/>
</dbReference>
<dbReference type="SMR" id="P27071"/>
<dbReference type="GeneID" id="801418"/>
<dbReference type="GO" id="GO:0009536">
    <property type="term" value="C:plastid"/>
    <property type="evidence" value="ECO:0007669"/>
    <property type="project" value="UniProtKB-SubCell"/>
</dbReference>
<dbReference type="GO" id="GO:0015935">
    <property type="term" value="C:small ribosomal subunit"/>
    <property type="evidence" value="ECO:0007669"/>
    <property type="project" value="TreeGrafter"/>
</dbReference>
<dbReference type="GO" id="GO:0003735">
    <property type="term" value="F:structural constituent of ribosome"/>
    <property type="evidence" value="ECO:0007669"/>
    <property type="project" value="InterPro"/>
</dbReference>
<dbReference type="GO" id="GO:0006412">
    <property type="term" value="P:translation"/>
    <property type="evidence" value="ECO:0007669"/>
    <property type="project" value="InterPro"/>
</dbReference>
<dbReference type="FunFam" id="1.10.287.1480:FF:000001">
    <property type="entry name" value="30S ribosomal protein S14"/>
    <property type="match status" value="1"/>
</dbReference>
<dbReference type="Gene3D" id="1.10.287.1480">
    <property type="match status" value="1"/>
</dbReference>
<dbReference type="HAMAP" id="MF_00537">
    <property type="entry name" value="Ribosomal_uS14_1"/>
    <property type="match status" value="1"/>
</dbReference>
<dbReference type="InterPro" id="IPR001209">
    <property type="entry name" value="Ribosomal_uS14"/>
</dbReference>
<dbReference type="InterPro" id="IPR023036">
    <property type="entry name" value="Ribosomal_uS14_bac/plastid"/>
</dbReference>
<dbReference type="InterPro" id="IPR018271">
    <property type="entry name" value="Ribosomal_uS14_CS"/>
</dbReference>
<dbReference type="NCBIfam" id="NF006477">
    <property type="entry name" value="PRK08881.1"/>
    <property type="match status" value="1"/>
</dbReference>
<dbReference type="PANTHER" id="PTHR19836">
    <property type="entry name" value="30S RIBOSOMAL PROTEIN S14"/>
    <property type="match status" value="1"/>
</dbReference>
<dbReference type="PANTHER" id="PTHR19836:SF19">
    <property type="entry name" value="SMALL RIBOSOMAL SUBUNIT PROTEIN US14M"/>
    <property type="match status" value="1"/>
</dbReference>
<dbReference type="Pfam" id="PF00253">
    <property type="entry name" value="Ribosomal_S14"/>
    <property type="match status" value="1"/>
</dbReference>
<dbReference type="SUPFAM" id="SSF57716">
    <property type="entry name" value="Glucocorticoid receptor-like (DNA-binding domain)"/>
    <property type="match status" value="1"/>
</dbReference>
<dbReference type="PROSITE" id="PS00527">
    <property type="entry name" value="RIBOSOMAL_S14"/>
    <property type="match status" value="1"/>
</dbReference>
<proteinExistence type="inferred from homology"/>
<reference key="1">
    <citation type="journal article" date="1991" name="EMBO J.">
        <title>Plastid translation and transcription genes in a non-photosynthetic plant: intact, missing and pseudo genes.</title>
        <authorList>
            <person name="Morden C.W."/>
            <person name="Wolfe K.H."/>
            <person name="Depamphilis C.W."/>
            <person name="Palmer J.D."/>
        </authorList>
    </citation>
    <scope>NUCLEOTIDE SEQUENCE [GENOMIC DNA]</scope>
</reference>
<reference key="2">
    <citation type="journal article" date="1992" name="Proc. Natl. Acad. Sci. U.S.A.">
        <title>Function and evolution of a minimal plastid genome from a nonphotosynthetic parasitic plant.</title>
        <authorList>
            <person name="Wolfe K.H."/>
            <person name="Morden C.W."/>
            <person name="Palmer J.D."/>
        </authorList>
    </citation>
    <scope>NUCLEOTIDE SEQUENCE [LARGE SCALE GENOMIC DNA]</scope>
</reference>
<reference key="3">
    <citation type="journal article" date="1992" name="J. Mol. Evol.">
        <title>Rapid evolution of the plastid translational apparatus in a nonphotosynthetic plant: loss or accelerated sequence evolution of tRNA and ribosomal protein genes.</title>
        <authorList>
            <person name="Wolfe K.H."/>
            <person name="Morden C.W."/>
            <person name="Ems S.C."/>
            <person name="Palmer J.D."/>
        </authorList>
    </citation>
    <scope>NUCLEOTIDE SEQUENCE [GENOMIC DNA]</scope>
</reference>
<comment type="function">
    <text evidence="1">Binds 16S rRNA, required for the assembly of 30S particles.</text>
</comment>
<comment type="subunit">
    <text evidence="1">Part of the 30S ribosomal subunit.</text>
</comment>
<comment type="subcellular location">
    <subcellularLocation>
        <location>Plastid</location>
    </subcellularLocation>
</comment>
<comment type="similarity">
    <text evidence="1">Belongs to the universal ribosomal protein uS14 family.</text>
</comment>
<geneLocation type="non-photosynthetic plastid"/>
<gene>
    <name evidence="1" type="primary">rps14</name>
</gene>
<organism>
    <name type="scientific">Epifagus virginiana</name>
    <name type="common">Beechdrops</name>
    <name type="synonym">Orobanche virginiana</name>
    <dbReference type="NCBI Taxonomy" id="4177"/>
    <lineage>
        <taxon>Eukaryota</taxon>
        <taxon>Viridiplantae</taxon>
        <taxon>Streptophyta</taxon>
        <taxon>Embryophyta</taxon>
        <taxon>Tracheophyta</taxon>
        <taxon>Spermatophyta</taxon>
        <taxon>Magnoliopsida</taxon>
        <taxon>eudicotyledons</taxon>
        <taxon>Gunneridae</taxon>
        <taxon>Pentapetalae</taxon>
        <taxon>asterids</taxon>
        <taxon>lamiids</taxon>
        <taxon>Lamiales</taxon>
        <taxon>Orobanchaceae</taxon>
        <taxon>Orobancheae</taxon>
        <taxon>Epifagus</taxon>
    </lineage>
</organism>
<sequence>MARKSLIQREKGRLKLENKYHFIRRSSKNEISKVPSLSDKWEIYGKLESPPRNSAPTRLRRRCFYTGRPRANYRDFGLCGHILREMVNACLLPGATRSSW</sequence>
<keyword id="KW-0934">Plastid</keyword>
<keyword id="KW-0687">Ribonucleoprotein</keyword>
<keyword id="KW-0689">Ribosomal protein</keyword>
<name>RR14_EPIVI</name>
<protein>
    <recommendedName>
        <fullName evidence="2">Small ribosomal subunit protein uS14c</fullName>
    </recommendedName>
    <alternativeName>
        <fullName>Plastid 30S ribosomal protein S14</fullName>
    </alternativeName>
</protein>
<feature type="chain" id="PRO_0000130971" description="Small ribosomal subunit protein uS14c">
    <location>
        <begin position="1"/>
        <end position="100"/>
    </location>
</feature>